<evidence type="ECO:0000255" key="1">
    <source>
        <dbReference type="HAMAP-Rule" id="MF_00651"/>
    </source>
</evidence>
<keyword id="KW-0963">Cytoplasm</keyword>
<keyword id="KW-0378">Hydrolase</keyword>
<keyword id="KW-0540">Nuclease</keyword>
<keyword id="KW-1185">Reference proteome</keyword>
<keyword id="KW-0690">Ribosome biogenesis</keyword>
<dbReference type="EC" id="3.1.-.-" evidence="1"/>
<dbReference type="EMBL" id="CP001043">
    <property type="protein sequence ID" value="ACC71501.1"/>
    <property type="molecule type" value="Genomic_DNA"/>
</dbReference>
<dbReference type="RefSeq" id="WP_012401707.1">
    <property type="nucleotide sequence ID" value="NC_010622.1"/>
</dbReference>
<dbReference type="SMR" id="B2JFD3"/>
<dbReference type="STRING" id="391038.Bphy_2326"/>
<dbReference type="KEGG" id="bph:Bphy_2326"/>
<dbReference type="eggNOG" id="COG0816">
    <property type="taxonomic scope" value="Bacteria"/>
</dbReference>
<dbReference type="HOGENOM" id="CLU_098240_3_2_4"/>
<dbReference type="OrthoDB" id="9796140at2"/>
<dbReference type="Proteomes" id="UP000001192">
    <property type="component" value="Chromosome 1"/>
</dbReference>
<dbReference type="GO" id="GO:0005829">
    <property type="term" value="C:cytosol"/>
    <property type="evidence" value="ECO:0007669"/>
    <property type="project" value="TreeGrafter"/>
</dbReference>
<dbReference type="GO" id="GO:0004518">
    <property type="term" value="F:nuclease activity"/>
    <property type="evidence" value="ECO:0007669"/>
    <property type="project" value="UniProtKB-KW"/>
</dbReference>
<dbReference type="GO" id="GO:0000967">
    <property type="term" value="P:rRNA 5'-end processing"/>
    <property type="evidence" value="ECO:0007669"/>
    <property type="project" value="UniProtKB-UniRule"/>
</dbReference>
<dbReference type="CDD" id="cd16964">
    <property type="entry name" value="YqgF"/>
    <property type="match status" value="1"/>
</dbReference>
<dbReference type="Gene3D" id="3.30.420.140">
    <property type="entry name" value="YqgF/RNase H-like domain"/>
    <property type="match status" value="1"/>
</dbReference>
<dbReference type="HAMAP" id="MF_00651">
    <property type="entry name" value="Nuclease_YqgF"/>
    <property type="match status" value="1"/>
</dbReference>
<dbReference type="InterPro" id="IPR012337">
    <property type="entry name" value="RNaseH-like_sf"/>
</dbReference>
<dbReference type="InterPro" id="IPR005227">
    <property type="entry name" value="YqgF"/>
</dbReference>
<dbReference type="InterPro" id="IPR006641">
    <property type="entry name" value="YqgF/RNaseH-like_dom"/>
</dbReference>
<dbReference type="InterPro" id="IPR037027">
    <property type="entry name" value="YqgF/RNaseH-like_dom_sf"/>
</dbReference>
<dbReference type="NCBIfam" id="TIGR00250">
    <property type="entry name" value="RNAse_H_YqgF"/>
    <property type="match status" value="1"/>
</dbReference>
<dbReference type="PANTHER" id="PTHR33317">
    <property type="entry name" value="POLYNUCLEOTIDYL TRANSFERASE, RIBONUCLEASE H-LIKE SUPERFAMILY PROTEIN"/>
    <property type="match status" value="1"/>
</dbReference>
<dbReference type="PANTHER" id="PTHR33317:SF4">
    <property type="entry name" value="POLYNUCLEOTIDYL TRANSFERASE, RIBONUCLEASE H-LIKE SUPERFAMILY PROTEIN"/>
    <property type="match status" value="1"/>
</dbReference>
<dbReference type="Pfam" id="PF03652">
    <property type="entry name" value="RuvX"/>
    <property type="match status" value="1"/>
</dbReference>
<dbReference type="SMART" id="SM00732">
    <property type="entry name" value="YqgFc"/>
    <property type="match status" value="1"/>
</dbReference>
<dbReference type="SUPFAM" id="SSF53098">
    <property type="entry name" value="Ribonuclease H-like"/>
    <property type="match status" value="1"/>
</dbReference>
<reference key="1">
    <citation type="journal article" date="2014" name="Stand. Genomic Sci.">
        <title>Complete genome sequence of Burkholderia phymatum STM815(T), a broad host range and efficient nitrogen-fixing symbiont of Mimosa species.</title>
        <authorList>
            <person name="Moulin L."/>
            <person name="Klonowska A."/>
            <person name="Caroline B."/>
            <person name="Booth K."/>
            <person name="Vriezen J.A."/>
            <person name="Melkonian R."/>
            <person name="James E.K."/>
            <person name="Young J.P."/>
            <person name="Bena G."/>
            <person name="Hauser L."/>
            <person name="Land M."/>
            <person name="Kyrpides N."/>
            <person name="Bruce D."/>
            <person name="Chain P."/>
            <person name="Copeland A."/>
            <person name="Pitluck S."/>
            <person name="Woyke T."/>
            <person name="Lizotte-Waniewski M."/>
            <person name="Bristow J."/>
            <person name="Riley M."/>
        </authorList>
    </citation>
    <scope>NUCLEOTIDE SEQUENCE [LARGE SCALE GENOMIC DNA]</scope>
    <source>
        <strain>DSM 17167 / CIP 108236 / LMG 21445 / STM815</strain>
    </source>
</reference>
<organism>
    <name type="scientific">Paraburkholderia phymatum (strain DSM 17167 / CIP 108236 / LMG 21445 / STM815)</name>
    <name type="common">Burkholderia phymatum</name>
    <dbReference type="NCBI Taxonomy" id="391038"/>
    <lineage>
        <taxon>Bacteria</taxon>
        <taxon>Pseudomonadati</taxon>
        <taxon>Pseudomonadota</taxon>
        <taxon>Betaproteobacteria</taxon>
        <taxon>Burkholderiales</taxon>
        <taxon>Burkholderiaceae</taxon>
        <taxon>Paraburkholderia</taxon>
    </lineage>
</organism>
<proteinExistence type="inferred from homology"/>
<sequence length="151" mass="16740">MSGVAGREATLLAFDYGEKRIGVAVGNSLTRSARPLVVLQNRNREYRFEAVGKLIDEWKPDALVVGLPMHPDGTPHERTQLAKRFGNQLNGRFNLPVTWIDERYSSVEAEAGIRSGTRQAGMLDAEAACIILQQYLDGLSLEGPSDDHEFR</sequence>
<feature type="chain" id="PRO_1000131008" description="Putative pre-16S rRNA nuclease">
    <location>
        <begin position="1"/>
        <end position="151"/>
    </location>
</feature>
<gene>
    <name type="ordered locus">Bphy_2326</name>
</gene>
<name>YQGF_PARP8</name>
<protein>
    <recommendedName>
        <fullName evidence="1">Putative pre-16S rRNA nuclease</fullName>
        <ecNumber evidence="1">3.1.-.-</ecNumber>
    </recommendedName>
</protein>
<comment type="function">
    <text evidence="1">Could be a nuclease involved in processing of the 5'-end of pre-16S rRNA.</text>
</comment>
<comment type="subcellular location">
    <subcellularLocation>
        <location evidence="1">Cytoplasm</location>
    </subcellularLocation>
</comment>
<comment type="similarity">
    <text evidence="1">Belongs to the YqgF nuclease family.</text>
</comment>
<accession>B2JFD3</accession>